<protein>
    <recommendedName>
        <fullName evidence="1">UDP-N-acetylglucosamine 1-carboxyvinyltransferase</fullName>
        <ecNumber evidence="1">2.5.1.7</ecNumber>
    </recommendedName>
    <alternativeName>
        <fullName evidence="1">Enoylpyruvate transferase</fullName>
    </alternativeName>
    <alternativeName>
        <fullName evidence="1">UDP-N-acetylglucosamine enolpyruvyl transferase</fullName>
        <shortName evidence="1">EPT</shortName>
    </alternativeName>
</protein>
<sequence length="424" mass="45442">MDKFRVYGQSRLSGSVNISGAKNAALPILFAAILATEPVKLTNVPELKDIETTLNILRQLGVIANRDETGAVLLDASNINHFTAPYELVKTMRASIWALAPLVARFHQAQVSLPGGCSIGARPVDLHISGLEKLGADIVLEEGYVKAQVSDRLVGTRIVIEKVSVGATLSIMMAATLAKGTTVIENAAREPEIVDTADFLNKMGAKITGAGSDHITTEGVERLTGCEHSIVPDRIETGTFLIAAAISGGRVVCQNTKADTLDAVIDKLREAGAQVDVTENSITLDMLGNRPKAVNIRTAPHPGFPTDMQAQFTLLNMVAEGTSIITETIFENRFMHIPELIRMGGKAEIEGNTAVCHGVEQLSGTEVIATDLRASISLVLAGCIATGETIVDRIYHIDRGYEHIEDKLRALGAKIERFSRSDEA</sequence>
<keyword id="KW-0131">Cell cycle</keyword>
<keyword id="KW-0132">Cell division</keyword>
<keyword id="KW-0133">Cell shape</keyword>
<keyword id="KW-0961">Cell wall biogenesis/degradation</keyword>
<keyword id="KW-0963">Cytoplasm</keyword>
<keyword id="KW-0573">Peptidoglycan synthesis</keyword>
<keyword id="KW-0670">Pyruvate</keyword>
<keyword id="KW-0808">Transferase</keyword>
<gene>
    <name evidence="1" type="primary">murA</name>
    <name type="ordered locus">NTHI1244</name>
</gene>
<comment type="function">
    <text evidence="1">Cell wall formation. Adds enolpyruvyl to UDP-N-acetylglucosamine.</text>
</comment>
<comment type="catalytic activity">
    <reaction evidence="1">
        <text>phosphoenolpyruvate + UDP-N-acetyl-alpha-D-glucosamine = UDP-N-acetyl-3-O-(1-carboxyvinyl)-alpha-D-glucosamine + phosphate</text>
        <dbReference type="Rhea" id="RHEA:18681"/>
        <dbReference type="ChEBI" id="CHEBI:43474"/>
        <dbReference type="ChEBI" id="CHEBI:57705"/>
        <dbReference type="ChEBI" id="CHEBI:58702"/>
        <dbReference type="ChEBI" id="CHEBI:68483"/>
        <dbReference type="EC" id="2.5.1.7"/>
    </reaction>
</comment>
<comment type="pathway">
    <text evidence="1">Cell wall biogenesis; peptidoglycan biosynthesis.</text>
</comment>
<comment type="subcellular location">
    <subcellularLocation>
        <location evidence="1">Cytoplasm</location>
    </subcellularLocation>
</comment>
<comment type="similarity">
    <text evidence="1">Belongs to the EPSP synthase family. MurA subfamily.</text>
</comment>
<dbReference type="EC" id="2.5.1.7" evidence="1"/>
<dbReference type="EMBL" id="CP000057">
    <property type="protein sequence ID" value="AAX88090.1"/>
    <property type="molecule type" value="Genomic_DNA"/>
</dbReference>
<dbReference type="RefSeq" id="WP_011272378.1">
    <property type="nucleotide sequence ID" value="NC_007146.2"/>
</dbReference>
<dbReference type="SMR" id="Q4QLK7"/>
<dbReference type="BindingDB" id="Q4QLK7"/>
<dbReference type="KEGG" id="hit:NTHI1244"/>
<dbReference type="HOGENOM" id="CLU_027387_0_0_6"/>
<dbReference type="UniPathway" id="UPA00219"/>
<dbReference type="Proteomes" id="UP000002525">
    <property type="component" value="Chromosome"/>
</dbReference>
<dbReference type="GO" id="GO:0005737">
    <property type="term" value="C:cytoplasm"/>
    <property type="evidence" value="ECO:0007669"/>
    <property type="project" value="UniProtKB-SubCell"/>
</dbReference>
<dbReference type="GO" id="GO:0008760">
    <property type="term" value="F:UDP-N-acetylglucosamine 1-carboxyvinyltransferase activity"/>
    <property type="evidence" value="ECO:0000315"/>
    <property type="project" value="CACAO"/>
</dbReference>
<dbReference type="GO" id="GO:0051301">
    <property type="term" value="P:cell division"/>
    <property type="evidence" value="ECO:0007669"/>
    <property type="project" value="UniProtKB-KW"/>
</dbReference>
<dbReference type="GO" id="GO:0071555">
    <property type="term" value="P:cell wall organization"/>
    <property type="evidence" value="ECO:0007669"/>
    <property type="project" value="UniProtKB-KW"/>
</dbReference>
<dbReference type="GO" id="GO:0009252">
    <property type="term" value="P:peptidoglycan biosynthetic process"/>
    <property type="evidence" value="ECO:0007669"/>
    <property type="project" value="UniProtKB-UniRule"/>
</dbReference>
<dbReference type="GO" id="GO:0008360">
    <property type="term" value="P:regulation of cell shape"/>
    <property type="evidence" value="ECO:0007669"/>
    <property type="project" value="UniProtKB-KW"/>
</dbReference>
<dbReference type="GO" id="GO:0019277">
    <property type="term" value="P:UDP-N-acetylgalactosamine biosynthetic process"/>
    <property type="evidence" value="ECO:0007669"/>
    <property type="project" value="InterPro"/>
</dbReference>
<dbReference type="CDD" id="cd01555">
    <property type="entry name" value="UdpNAET"/>
    <property type="match status" value="1"/>
</dbReference>
<dbReference type="FunFam" id="3.65.10.10:FF:000002">
    <property type="entry name" value="UDP-N-acetylglucosamine 1-carboxyvinyltransferase"/>
    <property type="match status" value="1"/>
</dbReference>
<dbReference type="Gene3D" id="3.65.10.10">
    <property type="entry name" value="Enolpyruvate transferase domain"/>
    <property type="match status" value="2"/>
</dbReference>
<dbReference type="HAMAP" id="MF_00111">
    <property type="entry name" value="MurA"/>
    <property type="match status" value="1"/>
</dbReference>
<dbReference type="InterPro" id="IPR001986">
    <property type="entry name" value="Enolpyruvate_Tfrase_dom"/>
</dbReference>
<dbReference type="InterPro" id="IPR036968">
    <property type="entry name" value="Enolpyruvate_Tfrase_sf"/>
</dbReference>
<dbReference type="InterPro" id="IPR050068">
    <property type="entry name" value="MurA_subfamily"/>
</dbReference>
<dbReference type="InterPro" id="IPR013792">
    <property type="entry name" value="RNA3'P_cycl/enolpyr_Trfase_a/b"/>
</dbReference>
<dbReference type="InterPro" id="IPR005750">
    <property type="entry name" value="UDP_GlcNAc_COvinyl_MurA"/>
</dbReference>
<dbReference type="NCBIfam" id="TIGR01072">
    <property type="entry name" value="murA"/>
    <property type="match status" value="1"/>
</dbReference>
<dbReference type="NCBIfam" id="NF006873">
    <property type="entry name" value="PRK09369.1"/>
    <property type="match status" value="1"/>
</dbReference>
<dbReference type="PANTHER" id="PTHR43783">
    <property type="entry name" value="UDP-N-ACETYLGLUCOSAMINE 1-CARBOXYVINYLTRANSFERASE"/>
    <property type="match status" value="1"/>
</dbReference>
<dbReference type="PANTHER" id="PTHR43783:SF1">
    <property type="entry name" value="UDP-N-ACETYLGLUCOSAMINE 1-CARBOXYVINYLTRANSFERASE"/>
    <property type="match status" value="1"/>
</dbReference>
<dbReference type="Pfam" id="PF00275">
    <property type="entry name" value="EPSP_synthase"/>
    <property type="match status" value="1"/>
</dbReference>
<dbReference type="SUPFAM" id="SSF55205">
    <property type="entry name" value="EPT/RTPC-like"/>
    <property type="match status" value="1"/>
</dbReference>
<feature type="chain" id="PRO_0000231211" description="UDP-N-acetylglucosamine 1-carboxyvinyltransferase">
    <location>
        <begin position="1"/>
        <end position="424"/>
    </location>
</feature>
<feature type="active site" description="Proton donor" evidence="1">
    <location>
        <position position="117"/>
    </location>
</feature>
<feature type="binding site" evidence="1">
    <location>
        <begin position="22"/>
        <end position="23"/>
    </location>
    <ligand>
        <name>phosphoenolpyruvate</name>
        <dbReference type="ChEBI" id="CHEBI:58702"/>
    </ligand>
</feature>
<feature type="binding site" evidence="1">
    <location>
        <position position="93"/>
    </location>
    <ligand>
        <name>UDP-N-acetyl-alpha-D-glucosamine</name>
        <dbReference type="ChEBI" id="CHEBI:57705"/>
    </ligand>
</feature>
<feature type="binding site" evidence="1">
    <location>
        <begin position="122"/>
        <end position="126"/>
    </location>
    <ligand>
        <name>UDP-N-acetyl-alpha-D-glucosamine</name>
        <dbReference type="ChEBI" id="CHEBI:57705"/>
    </ligand>
</feature>
<feature type="binding site" evidence="1">
    <location>
        <begin position="162"/>
        <end position="165"/>
    </location>
    <ligand>
        <name>UDP-N-acetyl-alpha-D-glucosamine</name>
        <dbReference type="ChEBI" id="CHEBI:57705"/>
    </ligand>
</feature>
<feature type="binding site" evidence="1">
    <location>
        <position position="307"/>
    </location>
    <ligand>
        <name>UDP-N-acetyl-alpha-D-glucosamine</name>
        <dbReference type="ChEBI" id="CHEBI:57705"/>
    </ligand>
</feature>
<feature type="binding site" evidence="1">
    <location>
        <position position="329"/>
    </location>
    <ligand>
        <name>UDP-N-acetyl-alpha-D-glucosamine</name>
        <dbReference type="ChEBI" id="CHEBI:57705"/>
    </ligand>
</feature>
<feature type="modified residue" description="2-(S-cysteinyl)pyruvic acid O-phosphothioketal" evidence="1">
    <location>
        <position position="117"/>
    </location>
</feature>
<organism>
    <name type="scientific">Haemophilus influenzae (strain 86-028NP)</name>
    <dbReference type="NCBI Taxonomy" id="281310"/>
    <lineage>
        <taxon>Bacteria</taxon>
        <taxon>Pseudomonadati</taxon>
        <taxon>Pseudomonadota</taxon>
        <taxon>Gammaproteobacteria</taxon>
        <taxon>Pasteurellales</taxon>
        <taxon>Pasteurellaceae</taxon>
        <taxon>Haemophilus</taxon>
    </lineage>
</organism>
<proteinExistence type="inferred from homology"/>
<evidence type="ECO:0000255" key="1">
    <source>
        <dbReference type="HAMAP-Rule" id="MF_00111"/>
    </source>
</evidence>
<name>MURA_HAEI8</name>
<accession>Q4QLK7</accession>
<reference key="1">
    <citation type="journal article" date="2005" name="J. Bacteriol.">
        <title>Genomic sequence of an otitis media isolate of nontypeable Haemophilus influenzae: comparative study with H. influenzae serotype d, strain KW20.</title>
        <authorList>
            <person name="Harrison A."/>
            <person name="Dyer D.W."/>
            <person name="Gillaspy A."/>
            <person name="Ray W.C."/>
            <person name="Mungur R."/>
            <person name="Carson M.B."/>
            <person name="Zhong H."/>
            <person name="Gipson J."/>
            <person name="Gipson M."/>
            <person name="Johnson L.S."/>
            <person name="Lewis L."/>
            <person name="Bakaletz L.O."/>
            <person name="Munson R.S. Jr."/>
        </authorList>
    </citation>
    <scope>NUCLEOTIDE SEQUENCE [LARGE SCALE GENOMIC DNA]</scope>
    <source>
        <strain>86-028NP</strain>
    </source>
</reference>